<protein>
    <recommendedName>
        <fullName evidence="1">Glycerol-3-phosphate dehydrogenase [NAD(P)+]</fullName>
        <ecNumber evidence="1">1.1.1.94</ecNumber>
    </recommendedName>
    <alternativeName>
        <fullName evidence="1">NAD(P)(+)-dependent glycerol-3-phosphate dehydrogenase</fullName>
    </alternativeName>
    <alternativeName>
        <fullName evidence="1">NAD(P)H-dependent dihydroxyacetone-phosphate reductase</fullName>
    </alternativeName>
</protein>
<evidence type="ECO:0000255" key="1">
    <source>
        <dbReference type="HAMAP-Rule" id="MF_00394"/>
    </source>
</evidence>
<feature type="chain" id="PRO_0000255388" description="Glycerol-3-phosphate dehydrogenase [NAD(P)+]">
    <location>
        <begin position="1"/>
        <end position="310"/>
    </location>
</feature>
<feature type="active site" description="Proton acceptor" evidence="1">
    <location>
        <position position="170"/>
    </location>
</feature>
<feature type="binding site" evidence="1">
    <location>
        <position position="19"/>
    </location>
    <ligand>
        <name>NADPH</name>
        <dbReference type="ChEBI" id="CHEBI:57783"/>
    </ligand>
</feature>
<feature type="binding site" evidence="1">
    <location>
        <position position="39"/>
    </location>
    <ligand>
        <name>NADPH</name>
        <dbReference type="ChEBI" id="CHEBI:57783"/>
    </ligand>
</feature>
<feature type="binding site" evidence="1">
    <location>
        <position position="40"/>
    </location>
    <ligand>
        <name>NADPH</name>
        <dbReference type="ChEBI" id="CHEBI:57783"/>
    </ligand>
</feature>
<feature type="binding site" evidence="1">
    <location>
        <position position="87"/>
    </location>
    <ligand>
        <name>NADPH</name>
        <dbReference type="ChEBI" id="CHEBI:57783"/>
    </ligand>
</feature>
<feature type="binding site" evidence="1">
    <location>
        <position position="87"/>
    </location>
    <ligand>
        <name>sn-glycerol 3-phosphate</name>
        <dbReference type="ChEBI" id="CHEBI:57597"/>
    </ligand>
</feature>
<feature type="binding site" evidence="1">
    <location>
        <position position="115"/>
    </location>
    <ligand>
        <name>sn-glycerol 3-phosphate</name>
        <dbReference type="ChEBI" id="CHEBI:57597"/>
    </ligand>
</feature>
<feature type="binding site" evidence="1">
    <location>
        <position position="119"/>
    </location>
    <ligand>
        <name>NADPH</name>
        <dbReference type="ChEBI" id="CHEBI:57783"/>
    </ligand>
</feature>
<feature type="binding site" evidence="1">
    <location>
        <position position="170"/>
    </location>
    <ligand>
        <name>sn-glycerol 3-phosphate</name>
        <dbReference type="ChEBI" id="CHEBI:57597"/>
    </ligand>
</feature>
<feature type="binding site" evidence="1">
    <location>
        <position position="223"/>
    </location>
    <ligand>
        <name>sn-glycerol 3-phosphate</name>
        <dbReference type="ChEBI" id="CHEBI:57597"/>
    </ligand>
</feature>
<feature type="binding site" evidence="1">
    <location>
        <position position="233"/>
    </location>
    <ligand>
        <name>sn-glycerol 3-phosphate</name>
        <dbReference type="ChEBI" id="CHEBI:57597"/>
    </ligand>
</feature>
<feature type="binding site" evidence="1">
    <location>
        <position position="234"/>
    </location>
    <ligand>
        <name>NADPH</name>
        <dbReference type="ChEBI" id="CHEBI:57783"/>
    </ligand>
</feature>
<feature type="binding site" evidence="1">
    <location>
        <position position="234"/>
    </location>
    <ligand>
        <name>sn-glycerol 3-phosphate</name>
        <dbReference type="ChEBI" id="CHEBI:57597"/>
    </ligand>
</feature>
<feature type="binding site" evidence="1">
    <location>
        <position position="235"/>
    </location>
    <ligand>
        <name>sn-glycerol 3-phosphate</name>
        <dbReference type="ChEBI" id="CHEBI:57597"/>
    </ligand>
</feature>
<feature type="binding site" evidence="1">
    <location>
        <position position="260"/>
    </location>
    <ligand>
        <name>NADPH</name>
        <dbReference type="ChEBI" id="CHEBI:57783"/>
    </ligand>
</feature>
<gene>
    <name evidence="1" type="primary">gpsA</name>
    <name type="ordered locus">CYA_0480</name>
</gene>
<sequence>MKTNTTSPQKIAILGAGAWGSTLALLAQAQGHRVQVWDRRKDLDLKEVLQGSQILISAVSMAGVRPVAEVVRQVGIPPQVILVSATKGLDPLQLLTPAQIWGAAFPNQPLVVLSGPNLSAEIRQGLPAAAVVASRDLWAAVQVQHALASERFRLYTSSDPLGVELGGILKNVIAIAVGVCDALHLGTNARAALVTRGLAEMIRVGSRLGARPETFNGLSGLGDLLATCHSPLSRNYQVGYGLGQGRPLSQVLAEIEGTAEGVYTAPVVVKIAAQHNIRVPITQEVHRLLQGQTTPTAALARLMERQLTSE</sequence>
<keyword id="KW-0963">Cytoplasm</keyword>
<keyword id="KW-0444">Lipid biosynthesis</keyword>
<keyword id="KW-0443">Lipid metabolism</keyword>
<keyword id="KW-0520">NAD</keyword>
<keyword id="KW-0521">NADP</keyword>
<keyword id="KW-0547">Nucleotide-binding</keyword>
<keyword id="KW-0560">Oxidoreductase</keyword>
<keyword id="KW-0594">Phospholipid biosynthesis</keyword>
<keyword id="KW-1208">Phospholipid metabolism</keyword>
<reference key="1">
    <citation type="journal article" date="2007" name="ISME J.">
        <title>Population level functional diversity in a microbial community revealed by comparative genomic and metagenomic analyses.</title>
        <authorList>
            <person name="Bhaya D."/>
            <person name="Grossman A.R."/>
            <person name="Steunou A.-S."/>
            <person name="Khuri N."/>
            <person name="Cohan F.M."/>
            <person name="Hamamura N."/>
            <person name="Melendrez M.C."/>
            <person name="Bateson M.M."/>
            <person name="Ward D.M."/>
            <person name="Heidelberg J.F."/>
        </authorList>
    </citation>
    <scope>NUCLEOTIDE SEQUENCE [LARGE SCALE GENOMIC DNA]</scope>
    <source>
        <strain>JA-3-3Ab</strain>
    </source>
</reference>
<accession>Q2JX02</accession>
<comment type="function">
    <text evidence="1">Catalyzes the reduction of the glycolytic intermediate dihydroxyacetone phosphate (DHAP) to sn-glycerol 3-phosphate (G3P), the key precursor for phospholipid synthesis.</text>
</comment>
<comment type="catalytic activity">
    <reaction evidence="1">
        <text>sn-glycerol 3-phosphate + NAD(+) = dihydroxyacetone phosphate + NADH + H(+)</text>
        <dbReference type="Rhea" id="RHEA:11092"/>
        <dbReference type="ChEBI" id="CHEBI:15378"/>
        <dbReference type="ChEBI" id="CHEBI:57540"/>
        <dbReference type="ChEBI" id="CHEBI:57597"/>
        <dbReference type="ChEBI" id="CHEBI:57642"/>
        <dbReference type="ChEBI" id="CHEBI:57945"/>
        <dbReference type="EC" id="1.1.1.94"/>
    </reaction>
    <physiologicalReaction direction="right-to-left" evidence="1">
        <dbReference type="Rhea" id="RHEA:11094"/>
    </physiologicalReaction>
</comment>
<comment type="catalytic activity">
    <reaction evidence="1">
        <text>sn-glycerol 3-phosphate + NADP(+) = dihydroxyacetone phosphate + NADPH + H(+)</text>
        <dbReference type="Rhea" id="RHEA:11096"/>
        <dbReference type="ChEBI" id="CHEBI:15378"/>
        <dbReference type="ChEBI" id="CHEBI:57597"/>
        <dbReference type="ChEBI" id="CHEBI:57642"/>
        <dbReference type="ChEBI" id="CHEBI:57783"/>
        <dbReference type="ChEBI" id="CHEBI:58349"/>
        <dbReference type="EC" id="1.1.1.94"/>
    </reaction>
    <physiologicalReaction direction="right-to-left" evidence="1">
        <dbReference type="Rhea" id="RHEA:11098"/>
    </physiologicalReaction>
</comment>
<comment type="pathway">
    <text evidence="1">Membrane lipid metabolism; glycerophospholipid metabolism.</text>
</comment>
<comment type="subcellular location">
    <subcellularLocation>
        <location evidence="1">Cytoplasm</location>
    </subcellularLocation>
</comment>
<comment type="similarity">
    <text evidence="1">Belongs to the NAD-dependent glycerol-3-phosphate dehydrogenase family.</text>
</comment>
<organism>
    <name type="scientific">Synechococcus sp. (strain JA-3-3Ab)</name>
    <name type="common">Cyanobacteria bacterium Yellowstone A-Prime</name>
    <dbReference type="NCBI Taxonomy" id="321327"/>
    <lineage>
        <taxon>Bacteria</taxon>
        <taxon>Bacillati</taxon>
        <taxon>Cyanobacteriota</taxon>
        <taxon>Cyanophyceae</taxon>
        <taxon>Synechococcales</taxon>
        <taxon>Synechococcaceae</taxon>
        <taxon>Synechococcus</taxon>
    </lineage>
</organism>
<proteinExistence type="inferred from homology"/>
<name>GPDA_SYNJA</name>
<dbReference type="EC" id="1.1.1.94" evidence="1"/>
<dbReference type="EMBL" id="CP000239">
    <property type="protein sequence ID" value="ABC98698.1"/>
    <property type="molecule type" value="Genomic_DNA"/>
</dbReference>
<dbReference type="RefSeq" id="WP_011429387.1">
    <property type="nucleotide sequence ID" value="NC_007775.1"/>
</dbReference>
<dbReference type="SMR" id="Q2JX02"/>
<dbReference type="STRING" id="321327.CYA_0480"/>
<dbReference type="KEGG" id="cya:CYA_0480"/>
<dbReference type="eggNOG" id="COG0240">
    <property type="taxonomic scope" value="Bacteria"/>
</dbReference>
<dbReference type="HOGENOM" id="CLU_033449_0_2_3"/>
<dbReference type="OrthoDB" id="9812273at2"/>
<dbReference type="UniPathway" id="UPA00940"/>
<dbReference type="Proteomes" id="UP000008818">
    <property type="component" value="Chromosome"/>
</dbReference>
<dbReference type="GO" id="GO:0005829">
    <property type="term" value="C:cytosol"/>
    <property type="evidence" value="ECO:0007669"/>
    <property type="project" value="TreeGrafter"/>
</dbReference>
<dbReference type="GO" id="GO:0047952">
    <property type="term" value="F:glycerol-3-phosphate dehydrogenase [NAD(P)+] activity"/>
    <property type="evidence" value="ECO:0007669"/>
    <property type="project" value="UniProtKB-UniRule"/>
</dbReference>
<dbReference type="GO" id="GO:0051287">
    <property type="term" value="F:NAD binding"/>
    <property type="evidence" value="ECO:0007669"/>
    <property type="project" value="InterPro"/>
</dbReference>
<dbReference type="GO" id="GO:0005975">
    <property type="term" value="P:carbohydrate metabolic process"/>
    <property type="evidence" value="ECO:0007669"/>
    <property type="project" value="InterPro"/>
</dbReference>
<dbReference type="GO" id="GO:0046167">
    <property type="term" value="P:glycerol-3-phosphate biosynthetic process"/>
    <property type="evidence" value="ECO:0007669"/>
    <property type="project" value="UniProtKB-UniRule"/>
</dbReference>
<dbReference type="GO" id="GO:0046168">
    <property type="term" value="P:glycerol-3-phosphate catabolic process"/>
    <property type="evidence" value="ECO:0007669"/>
    <property type="project" value="InterPro"/>
</dbReference>
<dbReference type="GO" id="GO:0006650">
    <property type="term" value="P:glycerophospholipid metabolic process"/>
    <property type="evidence" value="ECO:0007669"/>
    <property type="project" value="UniProtKB-UniRule"/>
</dbReference>
<dbReference type="GO" id="GO:0008654">
    <property type="term" value="P:phospholipid biosynthetic process"/>
    <property type="evidence" value="ECO:0007669"/>
    <property type="project" value="UniProtKB-KW"/>
</dbReference>
<dbReference type="FunFam" id="1.10.1040.10:FF:000001">
    <property type="entry name" value="Glycerol-3-phosphate dehydrogenase [NAD(P)+]"/>
    <property type="match status" value="1"/>
</dbReference>
<dbReference type="FunFam" id="3.40.50.720:FF:001174">
    <property type="entry name" value="Glycerol-3-phosphate dehydrogenase [NAD(P)+]"/>
    <property type="match status" value="1"/>
</dbReference>
<dbReference type="Gene3D" id="1.10.1040.10">
    <property type="entry name" value="N-(1-d-carboxylethyl)-l-norvaline Dehydrogenase, domain 2"/>
    <property type="match status" value="1"/>
</dbReference>
<dbReference type="Gene3D" id="3.40.50.720">
    <property type="entry name" value="NAD(P)-binding Rossmann-like Domain"/>
    <property type="match status" value="2"/>
</dbReference>
<dbReference type="HAMAP" id="MF_00394">
    <property type="entry name" value="NAD_Glyc3P_dehydrog"/>
    <property type="match status" value="1"/>
</dbReference>
<dbReference type="InterPro" id="IPR008927">
    <property type="entry name" value="6-PGluconate_DH-like_C_sf"/>
</dbReference>
<dbReference type="InterPro" id="IPR013328">
    <property type="entry name" value="6PGD_dom2"/>
</dbReference>
<dbReference type="InterPro" id="IPR006168">
    <property type="entry name" value="G3P_DH_NAD-dep"/>
</dbReference>
<dbReference type="InterPro" id="IPR006109">
    <property type="entry name" value="G3P_DH_NAD-dep_C"/>
</dbReference>
<dbReference type="InterPro" id="IPR011128">
    <property type="entry name" value="G3P_DH_NAD-dep_N"/>
</dbReference>
<dbReference type="InterPro" id="IPR036291">
    <property type="entry name" value="NAD(P)-bd_dom_sf"/>
</dbReference>
<dbReference type="NCBIfam" id="NF000940">
    <property type="entry name" value="PRK00094.1-2"/>
    <property type="match status" value="1"/>
</dbReference>
<dbReference type="NCBIfam" id="NF000942">
    <property type="entry name" value="PRK00094.1-4"/>
    <property type="match status" value="1"/>
</dbReference>
<dbReference type="NCBIfam" id="NF011212">
    <property type="entry name" value="PRK14619.1"/>
    <property type="match status" value="1"/>
</dbReference>
<dbReference type="PANTHER" id="PTHR11728">
    <property type="entry name" value="GLYCEROL-3-PHOSPHATE DEHYDROGENASE"/>
    <property type="match status" value="1"/>
</dbReference>
<dbReference type="PANTHER" id="PTHR11728:SF1">
    <property type="entry name" value="GLYCEROL-3-PHOSPHATE DEHYDROGENASE [NAD(+)] 2, CHLOROPLASTIC"/>
    <property type="match status" value="1"/>
</dbReference>
<dbReference type="Pfam" id="PF07479">
    <property type="entry name" value="NAD_Gly3P_dh_C"/>
    <property type="match status" value="1"/>
</dbReference>
<dbReference type="Pfam" id="PF01210">
    <property type="entry name" value="NAD_Gly3P_dh_N"/>
    <property type="match status" value="2"/>
</dbReference>
<dbReference type="PIRSF" id="PIRSF000114">
    <property type="entry name" value="Glycerol-3-P_dh"/>
    <property type="match status" value="1"/>
</dbReference>
<dbReference type="SUPFAM" id="SSF48179">
    <property type="entry name" value="6-phosphogluconate dehydrogenase C-terminal domain-like"/>
    <property type="match status" value="1"/>
</dbReference>
<dbReference type="SUPFAM" id="SSF51735">
    <property type="entry name" value="NAD(P)-binding Rossmann-fold domains"/>
    <property type="match status" value="1"/>
</dbReference>
<dbReference type="PROSITE" id="PS00957">
    <property type="entry name" value="NAD_G3PDH"/>
    <property type="match status" value="1"/>
</dbReference>